<organism>
    <name type="scientific">Beauveria bassiana</name>
    <name type="common">White muscardine disease fungus</name>
    <name type="synonym">Tritirachium shiotae</name>
    <dbReference type="NCBI Taxonomy" id="176275"/>
    <lineage>
        <taxon>Eukaryota</taxon>
        <taxon>Fungi</taxon>
        <taxon>Dikarya</taxon>
        <taxon>Ascomycota</taxon>
        <taxon>Pezizomycotina</taxon>
        <taxon>Sordariomycetes</taxon>
        <taxon>Hypocreomycetidae</taxon>
        <taxon>Hypocreales</taxon>
        <taxon>Cordycipitaceae</taxon>
        <taxon>Beauveria</taxon>
    </lineage>
</organism>
<reference key="1">
    <citation type="journal article" date="2008" name="Chem. Biol.">
        <title>Biosynthesis of the cyclooligomer depsipeptide beauvericin, a virulence factor of the entomopathogenic fungus Beauveria bassiana.</title>
        <authorList>
            <person name="Xu Y."/>
            <person name="Orozco R."/>
            <person name="Kithsiri Wijeratne E.M."/>
            <person name="Leslie Gunatilaka A.A."/>
            <person name="Stock S.P."/>
            <person name="Molnar I."/>
        </authorList>
    </citation>
    <scope>NUCLEOTIDE SEQUENCE [GENOMIC DNA]</scope>
    <scope>FUNCTION</scope>
    <source>
        <strain>ATCC 7159</strain>
    </source>
</reference>
<reference key="2">
    <citation type="journal article" date="2009" name="ChemBioChem">
        <title>Combinatorial mutasynthesis of scrambled beauvericins, cyclooligomer depsipeptide cell migration inhibitors from Beauveria bassiana.</title>
        <authorList>
            <person name="Xu Y."/>
            <person name="Wijeratne E.M."/>
            <person name="Espinosa-Artiles P."/>
            <person name="Gunatilaka A.A."/>
            <person name="Molnar I."/>
        </authorList>
    </citation>
    <scope>FUNCTION</scope>
    <scope>DISRUPTION PHENOTYPE</scope>
</reference>
<reference key="3">
    <citation type="journal article" date="2016" name="Environ. Microbiol.">
        <title>Calmodulin-mediated suppression of 2-ketoisovalerate reductase in Beauveria bassiana beauvericin biosynthetic pathway.</title>
        <authorList>
            <person name="Kim J."/>
            <person name="Yoon D.H."/>
            <person name="Oh J."/>
            <person name="Hyun M.W."/>
            <person name="Han J.G."/>
            <person name="Sung G.H."/>
        </authorList>
    </citation>
    <scope>FUNCTION</scope>
    <scope>BIOPHYSICOCHEMICAL PROPERTIES</scope>
    <scope>CATALYTIC ACTIVITY</scope>
    <scope>ACTIVITY REGULATION</scope>
    <scope>SUBUNIT</scope>
    <scope>CALMODULIN-BINDING</scope>
</reference>
<reference key="4">
    <citation type="journal article" date="2017" name="Nat. Commun.">
        <title>Decoding and reprogramming fungal iterative nonribosomal peptide synthetases.</title>
        <authorList>
            <person name="Yu D."/>
            <person name="Xu F."/>
            <person name="Zhang S."/>
            <person name="Zhan J."/>
        </authorList>
    </citation>
    <scope>FUNCTION</scope>
</reference>
<proteinExistence type="evidence at protein level"/>
<protein>
    <recommendedName>
        <fullName evidence="7">Ketoisovalerate reductase</fullName>
        <shortName evidence="7">KIVR</shortName>
        <ecNumber evidence="5">1.2.7.-</ecNumber>
    </recommendedName>
</protein>
<gene>
    <name evidence="7" type="primary">kivr</name>
</gene>
<evidence type="ECO:0000250" key="1">
    <source>
        <dbReference type="UniProtKB" id="P0A9J4"/>
    </source>
</evidence>
<evidence type="ECO:0000256" key="2">
    <source>
        <dbReference type="SAM" id="MobiDB-lite"/>
    </source>
</evidence>
<evidence type="ECO:0000269" key="3">
    <source>
    </source>
</evidence>
<evidence type="ECO:0000269" key="4">
    <source>
    </source>
</evidence>
<evidence type="ECO:0000269" key="5">
    <source>
    </source>
</evidence>
<evidence type="ECO:0000269" key="6">
    <source>
    </source>
</evidence>
<evidence type="ECO:0000303" key="7">
    <source>
    </source>
</evidence>
<evidence type="ECO:0000305" key="8"/>
<evidence type="ECO:0000305" key="9">
    <source>
    </source>
</evidence>
<comment type="function">
    <text evidence="3 4 5 6">Ketoisovalerate reductase; part of the gene cluster that mediates the biosynthesis of beauvericin (BEA), a non-ribosomal cyclic hexadepsipeptide that shows antibiotic, antifungal, insecticidal, and cancer cell antiproliferative and antihaptotactic activity (PubMed:18804027, PubMed:19105175, PubMed:27449895). Ketoisovalerate reductase BEA2 catalyzes the NADPH-specific reduction of ketoisovaleric acid to hydroxyisovalerate, a precursor for beauvericin biosynthesis (PubMed:19105175, PubMed:27449895). The nonribosomal cyclodepsipeptide synthetase BEA1 then catalyzes the formation of beauvericin via condensation and cyclization of 3 dipeptidol monomers, each composed of one unit of hydroxyisovalerate and one unit of N-methyl-phenylalanine (PubMed:18804027, PubMed:28534477).</text>
</comment>
<comment type="catalytic activity">
    <reaction evidence="5">
        <text>(R)-2-hydroxy-3-methylbutanoate + NADP(+) = 3-methyl-2-oxobutanoate + NADPH + H(+)</text>
        <dbReference type="Rhea" id="RHEA:62268"/>
        <dbReference type="ChEBI" id="CHEBI:11851"/>
        <dbReference type="ChEBI" id="CHEBI:15378"/>
        <dbReference type="ChEBI" id="CHEBI:57783"/>
        <dbReference type="ChEBI" id="CHEBI:58349"/>
        <dbReference type="ChEBI" id="CHEBI:145660"/>
    </reaction>
</comment>
<comment type="activity regulation">
    <text evidence="5">Environmental stimuli such as light and salt stress suppress activity through stimulation of calmodulin (CaM) that binds BEA2 and probably impairs its dimerization.</text>
</comment>
<comment type="biophysicochemical properties">
    <phDependence>
        <text evidence="5">Optimum pH is 7.5.</text>
    </phDependence>
    <temperatureDependence>
        <text evidence="5">Optimum temperature is 35 degrees Celsius.</text>
    </temperatureDependence>
</comment>
<comment type="subunit">
    <text evidence="5 9">Homodimer (Probable). Binds to calmodulin in a calcium-independent manner (PubMed:27449895).</text>
</comment>
<comment type="disruption phenotype">
    <text evidence="4">Impairs the production of both beauvericin and bassianolide.</text>
</comment>
<comment type="similarity">
    <text evidence="8">Belongs to the ketopantoate reductase family.</text>
</comment>
<sequence length="462" mass="51495">MPSPEHPSWLSTLLADTRPPPKLFAWSPANLDSPTAVKPDRADRGDFDPGKYPVDAPITTASEPVKRIYIVGPGNVGRLYASYMSRQRDALPITLVVHRKELLSQWVTSEGVVLADRGGKVTKNKQFDVEWWTESRPRYGPVREVADGEKLHNVFISTKADAGLGEADRLRRYLGRCSSVVFAQNGVSKLWAPYGPLYVASRYHADDAPSFSACVVNHGISAAGLFYSIHTSPSDAFIGPIFKGSAAPAHGQNKRRRLDDDFFTTYISSTPFLDTKHVSSGQLWIIQLEKLVLNAAINPLTTLLRCKTGQLFASYDSHDALTRVLDQLLWQASAVIQALINHDANIDMLTSYAETVHRLVPGSDDYGRNFANIRRKLTVRFSQPILKAKLYAFGLNIREHRSSMLQDAEAGRKTEIRDVNGWIVDMAEYLGLDLDVGIHRGLIELIEECVVLDKEELARRLL</sequence>
<accession>B6D9A7</accession>
<feature type="chain" id="PRO_0000442152" description="Ketoisovalerate reductase">
    <location>
        <begin position="1"/>
        <end position="462"/>
    </location>
</feature>
<feature type="region of interest" description="Disordered" evidence="2">
    <location>
        <begin position="34"/>
        <end position="55"/>
    </location>
</feature>
<feature type="short sequence motif" description="Calmoduling-binding" evidence="5">
    <location>
        <begin position="167"/>
        <end position="184"/>
    </location>
</feature>
<feature type="compositionally biased region" description="Basic and acidic residues" evidence="2">
    <location>
        <begin position="38"/>
        <end position="49"/>
    </location>
</feature>
<feature type="active site" description="Proton donor" evidence="1">
    <location>
        <position position="290"/>
    </location>
</feature>
<feature type="binding site" evidence="1">
    <location>
        <begin position="72"/>
        <end position="77"/>
    </location>
    <ligand>
        <name>NADP(+)</name>
        <dbReference type="ChEBI" id="CHEBI:58349"/>
    </ligand>
</feature>
<feature type="binding site" evidence="1">
    <location>
        <position position="294"/>
    </location>
    <ligand>
        <name>substrate</name>
    </ligand>
</feature>
<feature type="binding site" evidence="1">
    <location>
        <position position="298"/>
    </location>
    <ligand>
        <name>substrate</name>
    </ligand>
</feature>
<feature type="binding site" evidence="1">
    <location>
        <position position="403"/>
    </location>
    <ligand>
        <name>substrate</name>
    </ligand>
</feature>
<feature type="binding site" evidence="1">
    <location>
        <position position="415"/>
    </location>
    <ligand>
        <name>NADP(+)</name>
        <dbReference type="ChEBI" id="CHEBI:58349"/>
    </ligand>
</feature>
<name>BEA2_BEABA</name>
<dbReference type="EC" id="1.2.7.-" evidence="5"/>
<dbReference type="EMBL" id="EU886196">
    <property type="protein sequence ID" value="ACI30654.1"/>
    <property type="molecule type" value="Genomic_DNA"/>
</dbReference>
<dbReference type="GO" id="GO:0005739">
    <property type="term" value="C:mitochondrion"/>
    <property type="evidence" value="ECO:0007669"/>
    <property type="project" value="TreeGrafter"/>
</dbReference>
<dbReference type="GO" id="GO:0008677">
    <property type="term" value="F:2-dehydropantoate 2-reductase activity"/>
    <property type="evidence" value="ECO:0007669"/>
    <property type="project" value="TreeGrafter"/>
</dbReference>
<dbReference type="GO" id="GO:0005516">
    <property type="term" value="F:calmodulin binding"/>
    <property type="evidence" value="ECO:0007669"/>
    <property type="project" value="UniProtKB-KW"/>
</dbReference>
<dbReference type="GO" id="GO:0050661">
    <property type="term" value="F:NADP binding"/>
    <property type="evidence" value="ECO:0007669"/>
    <property type="project" value="TreeGrafter"/>
</dbReference>
<dbReference type="Gene3D" id="1.10.1040.10">
    <property type="entry name" value="N-(1-d-carboxylethyl)-l-norvaline Dehydrogenase, domain 2"/>
    <property type="match status" value="1"/>
</dbReference>
<dbReference type="Gene3D" id="3.40.50.720">
    <property type="entry name" value="NAD(P)-binding Rossmann-like Domain"/>
    <property type="match status" value="1"/>
</dbReference>
<dbReference type="InterPro" id="IPR008927">
    <property type="entry name" value="6-PGluconate_DH-like_C_sf"/>
</dbReference>
<dbReference type="InterPro" id="IPR013328">
    <property type="entry name" value="6PGD_dom2"/>
</dbReference>
<dbReference type="InterPro" id="IPR050838">
    <property type="entry name" value="Ketopantoate_reductase"/>
</dbReference>
<dbReference type="InterPro" id="IPR013752">
    <property type="entry name" value="KPA_reductase"/>
</dbReference>
<dbReference type="InterPro" id="IPR013332">
    <property type="entry name" value="KPR_N"/>
</dbReference>
<dbReference type="PANTHER" id="PTHR43765:SF2">
    <property type="entry name" value="2-DEHYDROPANTOATE 2-REDUCTASE"/>
    <property type="match status" value="1"/>
</dbReference>
<dbReference type="PANTHER" id="PTHR43765">
    <property type="entry name" value="2-DEHYDROPANTOATE 2-REDUCTASE-RELATED"/>
    <property type="match status" value="1"/>
</dbReference>
<dbReference type="Pfam" id="PF02558">
    <property type="entry name" value="ApbA"/>
    <property type="match status" value="1"/>
</dbReference>
<dbReference type="Pfam" id="PF08546">
    <property type="entry name" value="ApbA_C"/>
    <property type="match status" value="1"/>
</dbReference>
<dbReference type="SUPFAM" id="SSF48179">
    <property type="entry name" value="6-phosphogluconate dehydrogenase C-terminal domain-like"/>
    <property type="match status" value="1"/>
</dbReference>
<keyword id="KW-0112">Calmodulin-binding</keyword>
<keyword id="KW-0521">NADP</keyword>
<keyword id="KW-0560">Oxidoreductase</keyword>